<proteinExistence type="evidence at protein level"/>
<keyword id="KW-0903">Direct protein sequencing</keyword>
<keyword id="KW-1185">Reference proteome</keyword>
<organism>
    <name type="scientific">Nicotiana tabacum</name>
    <name type="common">Common tobacco</name>
    <dbReference type="NCBI Taxonomy" id="4097"/>
    <lineage>
        <taxon>Eukaryota</taxon>
        <taxon>Viridiplantae</taxon>
        <taxon>Streptophyta</taxon>
        <taxon>Embryophyta</taxon>
        <taxon>Tracheophyta</taxon>
        <taxon>Spermatophyta</taxon>
        <taxon>Magnoliopsida</taxon>
        <taxon>eudicotyledons</taxon>
        <taxon>Gunneridae</taxon>
        <taxon>Pentapetalae</taxon>
        <taxon>asterids</taxon>
        <taxon>lamiids</taxon>
        <taxon>Solanales</taxon>
        <taxon>Solanaceae</taxon>
        <taxon>Nicotianoideae</taxon>
        <taxon>Nicotianeae</taxon>
        <taxon>Nicotiana</taxon>
    </lineage>
</organism>
<reference evidence="1" key="1">
    <citation type="submission" date="2000-10" db="UniProtKB">
        <authorList>
            <person name="Yamamoto Y."/>
            <person name="Asakura Y."/>
            <person name="Yamada H."/>
            <person name="Matsumoto H."/>
        </authorList>
    </citation>
    <scope>PROTEIN SEQUENCE</scope>
    <source>
        <strain>cv. Samsun</strain>
    </source>
</reference>
<name>UP01_TOBAC</name>
<dbReference type="PaxDb" id="4097-P82856"/>
<dbReference type="Proteomes" id="UP000084051">
    <property type="component" value="Unplaced"/>
</dbReference>
<sequence length="20" mass="2074">LLSTLTDTSIKEAVATDKAP</sequence>
<protein>
    <recommendedName>
        <fullName>Unknown protein from 2D-PAGE</fullName>
    </recommendedName>
</protein>
<evidence type="ECO:0000305" key="1"/>
<accession>P82856</accession>
<feature type="chain" id="PRO_0000257979" description="Unknown protein from 2D-PAGE">
    <location>
        <begin position="1"/>
        <end position="20" status="greater than"/>
    </location>
</feature>
<feature type="non-terminal residue">
    <location>
        <position position="20"/>
    </location>
</feature>
<comment type="miscellaneous">
    <text>On the 2D-gel the determined pI of this unknown protein is: 4.8, its MW is: 15.4 kDa.</text>
</comment>